<organism>
    <name type="scientific">Nicotiana plumbaginifolia</name>
    <name type="common">Leadwort-leaved tobacco</name>
    <name type="synonym">Tex-Mex tobacco</name>
    <dbReference type="NCBI Taxonomy" id="4092"/>
    <lineage>
        <taxon>Eukaryota</taxon>
        <taxon>Viridiplantae</taxon>
        <taxon>Streptophyta</taxon>
        <taxon>Embryophyta</taxon>
        <taxon>Tracheophyta</taxon>
        <taxon>Spermatophyta</taxon>
        <taxon>Magnoliopsida</taxon>
        <taxon>eudicotyledons</taxon>
        <taxon>Gunneridae</taxon>
        <taxon>Pentapetalae</taxon>
        <taxon>asterids</taxon>
        <taxon>lamiids</taxon>
        <taxon>Solanales</taxon>
        <taxon>Solanaceae</taxon>
        <taxon>Nicotianoideae</taxon>
        <taxon>Nicotianeae</taxon>
        <taxon>Nicotiana</taxon>
    </lineage>
</organism>
<feature type="chain" id="PRO_0000054952" description="Eukaryotic initiation factor 4A-3">
    <location>
        <begin position="1"/>
        <end position="391"/>
    </location>
</feature>
<feature type="domain" description="Helicase ATP-binding" evidence="2">
    <location>
        <begin position="49"/>
        <end position="219"/>
    </location>
</feature>
<feature type="domain" description="Helicase C-terminal" evidence="3">
    <location>
        <begin position="230"/>
        <end position="391"/>
    </location>
</feature>
<feature type="short sequence motif" description="Q motif">
    <location>
        <begin position="18"/>
        <end position="46"/>
    </location>
</feature>
<feature type="short sequence motif" description="DEAD box">
    <location>
        <begin position="167"/>
        <end position="170"/>
    </location>
</feature>
<feature type="binding site" evidence="2">
    <location>
        <begin position="62"/>
        <end position="69"/>
    </location>
    <ligand>
        <name>ATP</name>
        <dbReference type="ChEBI" id="CHEBI:30616"/>
    </ligand>
</feature>
<protein>
    <recommendedName>
        <fullName>Eukaryotic initiation factor 4A-3</fullName>
        <shortName>eIF-4A-3</shortName>
        <ecNumber>3.6.4.13</ecNumber>
    </recommendedName>
    <alternativeName>
        <fullName>ATP-dependent RNA helicase eIF4A-3</fullName>
    </alternativeName>
</protein>
<name>IF4A3_NICPL</name>
<keyword id="KW-0067">ATP-binding</keyword>
<keyword id="KW-0347">Helicase</keyword>
<keyword id="KW-0378">Hydrolase</keyword>
<keyword id="KW-0396">Initiation factor</keyword>
<keyword id="KW-0547">Nucleotide-binding</keyword>
<keyword id="KW-0648">Protein biosynthesis</keyword>
<keyword id="KW-0694">RNA-binding</keyword>
<proteinExistence type="evidence at transcript level"/>
<evidence type="ECO:0000250" key="1"/>
<evidence type="ECO:0000255" key="2">
    <source>
        <dbReference type="PROSITE-ProRule" id="PRU00541"/>
    </source>
</evidence>
<evidence type="ECO:0000255" key="3">
    <source>
        <dbReference type="PROSITE-ProRule" id="PRU00542"/>
    </source>
</evidence>
<evidence type="ECO:0000305" key="4"/>
<dbReference type="EC" id="3.6.4.13"/>
<dbReference type="EMBL" id="X61206">
    <property type="protein sequence ID" value="CAA43514.1"/>
    <property type="molecule type" value="mRNA"/>
</dbReference>
<dbReference type="PIR" id="S22579">
    <property type="entry name" value="S22579"/>
</dbReference>
<dbReference type="SMR" id="P41380"/>
<dbReference type="GO" id="GO:0005524">
    <property type="term" value="F:ATP binding"/>
    <property type="evidence" value="ECO:0007669"/>
    <property type="project" value="UniProtKB-KW"/>
</dbReference>
<dbReference type="GO" id="GO:0016887">
    <property type="term" value="F:ATP hydrolysis activity"/>
    <property type="evidence" value="ECO:0007669"/>
    <property type="project" value="RHEA"/>
</dbReference>
<dbReference type="GO" id="GO:0003723">
    <property type="term" value="F:RNA binding"/>
    <property type="evidence" value="ECO:0007669"/>
    <property type="project" value="UniProtKB-KW"/>
</dbReference>
<dbReference type="GO" id="GO:0003724">
    <property type="term" value="F:RNA helicase activity"/>
    <property type="evidence" value="ECO:0007669"/>
    <property type="project" value="UniProtKB-EC"/>
</dbReference>
<dbReference type="GO" id="GO:0003743">
    <property type="term" value="F:translation initiation factor activity"/>
    <property type="evidence" value="ECO:0007669"/>
    <property type="project" value="UniProtKB-KW"/>
</dbReference>
<dbReference type="CDD" id="cd18045">
    <property type="entry name" value="DEADc_EIF4AIII_DDX48"/>
    <property type="match status" value="1"/>
</dbReference>
<dbReference type="CDD" id="cd18787">
    <property type="entry name" value="SF2_C_DEAD"/>
    <property type="match status" value="1"/>
</dbReference>
<dbReference type="FunFam" id="3.40.50.300:FF:000849">
    <property type="entry name" value="ATP-dependent RNA helicase DBP5"/>
    <property type="match status" value="1"/>
</dbReference>
<dbReference type="FunFam" id="3.40.50.300:FF:000031">
    <property type="entry name" value="Eukaryotic initiation factor 4A-III"/>
    <property type="match status" value="1"/>
</dbReference>
<dbReference type="Gene3D" id="3.40.50.300">
    <property type="entry name" value="P-loop containing nucleotide triphosphate hydrolases"/>
    <property type="match status" value="2"/>
</dbReference>
<dbReference type="InterPro" id="IPR011545">
    <property type="entry name" value="DEAD/DEAH_box_helicase_dom"/>
</dbReference>
<dbReference type="InterPro" id="IPR014001">
    <property type="entry name" value="Helicase_ATP-bd"/>
</dbReference>
<dbReference type="InterPro" id="IPR001650">
    <property type="entry name" value="Helicase_C-like"/>
</dbReference>
<dbReference type="InterPro" id="IPR027417">
    <property type="entry name" value="P-loop_NTPase"/>
</dbReference>
<dbReference type="InterPro" id="IPR014014">
    <property type="entry name" value="RNA_helicase_DEAD_Q_motif"/>
</dbReference>
<dbReference type="PANTHER" id="PTHR47958">
    <property type="entry name" value="ATP-DEPENDENT RNA HELICASE DBP3"/>
    <property type="match status" value="1"/>
</dbReference>
<dbReference type="Pfam" id="PF00270">
    <property type="entry name" value="DEAD"/>
    <property type="match status" value="1"/>
</dbReference>
<dbReference type="Pfam" id="PF00271">
    <property type="entry name" value="Helicase_C"/>
    <property type="match status" value="1"/>
</dbReference>
<dbReference type="SMART" id="SM00487">
    <property type="entry name" value="DEXDc"/>
    <property type="match status" value="1"/>
</dbReference>
<dbReference type="SMART" id="SM00490">
    <property type="entry name" value="HELICc"/>
    <property type="match status" value="1"/>
</dbReference>
<dbReference type="SUPFAM" id="SSF52540">
    <property type="entry name" value="P-loop containing nucleoside triphosphate hydrolases"/>
    <property type="match status" value="1"/>
</dbReference>
<dbReference type="PROSITE" id="PS51192">
    <property type="entry name" value="HELICASE_ATP_BIND_1"/>
    <property type="match status" value="1"/>
</dbReference>
<dbReference type="PROSITE" id="PS51194">
    <property type="entry name" value="HELICASE_CTER"/>
    <property type="match status" value="1"/>
</dbReference>
<dbReference type="PROSITE" id="PS51195">
    <property type="entry name" value="Q_MOTIF"/>
    <property type="match status" value="1"/>
</dbReference>
<accession>P41380</accession>
<comment type="function">
    <text evidence="1">ATP-dependent RNA helicase which is a subunit of the eIF4F complex involved in cap recognition and is required for mRNA binding to ribosome. In the current model of translation initiation, eIF4A unwinds RNA secondary structures in the 5'-UTR of mRNAs which is necessary to allow efficient binding of the small ribosomal subunit, and subsequent scanning for the initiator codon (By similarity).</text>
</comment>
<comment type="catalytic activity">
    <reaction>
        <text>ATP + H2O = ADP + phosphate + H(+)</text>
        <dbReference type="Rhea" id="RHEA:13065"/>
        <dbReference type="ChEBI" id="CHEBI:15377"/>
        <dbReference type="ChEBI" id="CHEBI:15378"/>
        <dbReference type="ChEBI" id="CHEBI:30616"/>
        <dbReference type="ChEBI" id="CHEBI:43474"/>
        <dbReference type="ChEBI" id="CHEBI:456216"/>
        <dbReference type="EC" id="3.6.4.13"/>
    </reaction>
</comment>
<comment type="subunit">
    <text evidence="1">eIF4F is a multi-subunit complex, the composition of which varies with external and internal environmental conditions. It is composed of at least EIF4A, EIF4E and EIF4G (By similarity).</text>
</comment>
<comment type="similarity">
    <text evidence="4">Belongs to the DEAD box helicase family. eIF4A subfamily.</text>
</comment>
<sequence>MEEDRLVFETSKGVEPIASFAEMGIKDDLLRGVYQYGFEKPSAIQQRAVLPIISGRDVIAQAQSGTGKTSMIALTVCQIVDTKSSEVQALILSPTRELAAQTEKVILAIGDYINVQAHACIGGKSVGEDIRKLEHGVQVVSGTPGRVCDMIKRRTLRTRGIKLLILDESDEMLSRGFKDQIYDVYRYLPPELQVVLISATLPNEILEITSKFMTDPVRILVKRDELTLEGIKQFFVAVEKEEWKFDTLCDLYDTLTITQAVIFCNTKRKVDWLTSKMRENNFTVSSMHGDMPQKERDAIMAEFRGGTTRVLITTDVWARGLDVQQVSLVINYDLPNNRELYIHRIGRSGRFGRKGVAINFVKSDDIKILRDIEQYYSTQIDEMPMNVADLI</sequence>
<reference key="1">
    <citation type="journal article" date="1991" name="Nucleic Acids Res.">
        <title>Divergent genes for translation initiation factor eIF-4A are coordinately expressed in tobacco.</title>
        <authorList>
            <person name="Owttrim G.W."/>
            <person name="Hofmann S."/>
            <person name="Kuhlemeier C."/>
        </authorList>
    </citation>
    <scope>NUCLEOTIDE SEQUENCE [MRNA]</scope>
    <source>
        <tissue>Root</tissue>
    </source>
</reference>